<accession>Q58627</accession>
<organism>
    <name type="scientific">Methanocaldococcus jannaschii (strain ATCC 43067 / DSM 2661 / JAL-1 / JCM 10045 / NBRC 100440)</name>
    <name type="common">Methanococcus jannaschii</name>
    <dbReference type="NCBI Taxonomy" id="243232"/>
    <lineage>
        <taxon>Archaea</taxon>
        <taxon>Methanobacteriati</taxon>
        <taxon>Methanobacteriota</taxon>
        <taxon>Methanomada group</taxon>
        <taxon>Methanococci</taxon>
        <taxon>Methanococcales</taxon>
        <taxon>Methanocaldococcaceae</taxon>
        <taxon>Methanocaldococcus</taxon>
    </lineage>
</organism>
<sequence length="76" mass="8903">MVIFMEKRWKCPKCGNTEFFEKEVAMTGTGLSKIFDIQHNEYIVITCKKCGYSEFYDKSIVKSKDNLMNILDIFFG</sequence>
<protein>
    <recommendedName>
        <fullName>Uncharacterized protein MJ1230</fullName>
    </recommendedName>
</protein>
<proteinExistence type="predicted"/>
<reference key="1">
    <citation type="journal article" date="1996" name="Science">
        <title>Complete genome sequence of the methanogenic archaeon, Methanococcus jannaschii.</title>
        <authorList>
            <person name="Bult C.J."/>
            <person name="White O."/>
            <person name="Olsen G.J."/>
            <person name="Zhou L."/>
            <person name="Fleischmann R.D."/>
            <person name="Sutton G.G."/>
            <person name="Blake J.A."/>
            <person name="FitzGerald L.M."/>
            <person name="Clayton R.A."/>
            <person name="Gocayne J.D."/>
            <person name="Kerlavage A.R."/>
            <person name="Dougherty B.A."/>
            <person name="Tomb J.-F."/>
            <person name="Adams M.D."/>
            <person name="Reich C.I."/>
            <person name="Overbeek R."/>
            <person name="Kirkness E.F."/>
            <person name="Weinstock K.G."/>
            <person name="Merrick J.M."/>
            <person name="Glodek A."/>
            <person name="Scott J.L."/>
            <person name="Geoghagen N.S.M."/>
            <person name="Weidman J.F."/>
            <person name="Fuhrmann J.L."/>
            <person name="Nguyen D."/>
            <person name="Utterback T.R."/>
            <person name="Kelley J.M."/>
            <person name="Peterson J.D."/>
            <person name="Sadow P.W."/>
            <person name="Hanna M.C."/>
            <person name="Cotton M.D."/>
            <person name="Roberts K.M."/>
            <person name="Hurst M.A."/>
            <person name="Kaine B.P."/>
            <person name="Borodovsky M."/>
            <person name="Klenk H.-P."/>
            <person name="Fraser C.M."/>
            <person name="Smith H.O."/>
            <person name="Woese C.R."/>
            <person name="Venter J.C."/>
        </authorList>
    </citation>
    <scope>NUCLEOTIDE SEQUENCE [LARGE SCALE GENOMIC DNA]</scope>
    <source>
        <strain>ATCC 43067 / DSM 2661 / JAL-1 / JCM 10045 / NBRC 100440</strain>
    </source>
</reference>
<name>Y1230_METJA</name>
<gene>
    <name type="ordered locus">MJ1230</name>
</gene>
<keyword id="KW-1185">Reference proteome</keyword>
<feature type="chain" id="PRO_0000107227" description="Uncharacterized protein MJ1230">
    <location>
        <begin position="1"/>
        <end position="76"/>
    </location>
</feature>
<dbReference type="EMBL" id="L77117">
    <property type="protein sequence ID" value="AAB99236.1"/>
    <property type="molecule type" value="Genomic_DNA"/>
</dbReference>
<dbReference type="PIR" id="E64453">
    <property type="entry name" value="E64453"/>
</dbReference>
<dbReference type="FunCoup" id="Q58627">
    <property type="interactions" value="1"/>
</dbReference>
<dbReference type="STRING" id="243232.MJ_1230"/>
<dbReference type="PaxDb" id="243232-MJ_1230"/>
<dbReference type="EnsemblBacteria" id="AAB99236">
    <property type="protein sequence ID" value="AAB99236"/>
    <property type="gene ID" value="MJ_1230"/>
</dbReference>
<dbReference type="KEGG" id="mja:MJ_1230"/>
<dbReference type="eggNOG" id="arCOG05073">
    <property type="taxonomic scope" value="Archaea"/>
</dbReference>
<dbReference type="HOGENOM" id="CLU_188846_1_0_2"/>
<dbReference type="InParanoid" id="Q58627"/>
<dbReference type="OrthoDB" id="84364at2157"/>
<dbReference type="PhylomeDB" id="Q58627"/>
<dbReference type="Proteomes" id="UP000000805">
    <property type="component" value="Chromosome"/>
</dbReference>
<dbReference type="InterPro" id="IPR018652">
    <property type="entry name" value="DUF2082_NA-bd_Znr"/>
</dbReference>
<dbReference type="Pfam" id="PF09855">
    <property type="entry name" value="Zn_ribbon_13"/>
    <property type="match status" value="1"/>
</dbReference>